<organism>
    <name type="scientific">Bordetella parapertussis (strain 12822 / ATCC BAA-587 / NCTC 13253)</name>
    <dbReference type="NCBI Taxonomy" id="257311"/>
    <lineage>
        <taxon>Bacteria</taxon>
        <taxon>Pseudomonadati</taxon>
        <taxon>Pseudomonadota</taxon>
        <taxon>Betaproteobacteria</taxon>
        <taxon>Burkholderiales</taxon>
        <taxon>Alcaligenaceae</taxon>
        <taxon>Bordetella</taxon>
    </lineage>
</organism>
<gene>
    <name evidence="2" type="primary">argF</name>
    <name type="ordered locus">BPP2542</name>
</gene>
<feature type="chain" id="PRO_0000112892" description="Ornithine carbamoyltransferase">
    <location>
        <begin position="1"/>
        <end position="313"/>
    </location>
</feature>
<feature type="binding site" evidence="2">
    <location>
        <begin position="61"/>
        <end position="64"/>
    </location>
    <ligand>
        <name>carbamoyl phosphate</name>
        <dbReference type="ChEBI" id="CHEBI:58228"/>
    </ligand>
</feature>
<feature type="binding site" evidence="2">
    <location>
        <position position="88"/>
    </location>
    <ligand>
        <name>carbamoyl phosphate</name>
        <dbReference type="ChEBI" id="CHEBI:58228"/>
    </ligand>
</feature>
<feature type="binding site" evidence="2">
    <location>
        <position position="112"/>
    </location>
    <ligand>
        <name>carbamoyl phosphate</name>
        <dbReference type="ChEBI" id="CHEBI:58228"/>
    </ligand>
</feature>
<feature type="binding site" evidence="2">
    <location>
        <begin position="139"/>
        <end position="142"/>
    </location>
    <ligand>
        <name>carbamoyl phosphate</name>
        <dbReference type="ChEBI" id="CHEBI:58228"/>
    </ligand>
</feature>
<feature type="binding site" evidence="2">
    <location>
        <position position="170"/>
    </location>
    <ligand>
        <name>L-ornithine</name>
        <dbReference type="ChEBI" id="CHEBI:46911"/>
    </ligand>
</feature>
<feature type="binding site" evidence="2">
    <location>
        <position position="228"/>
    </location>
    <ligand>
        <name>L-ornithine</name>
        <dbReference type="ChEBI" id="CHEBI:46911"/>
    </ligand>
</feature>
<feature type="binding site" evidence="2">
    <location>
        <begin position="232"/>
        <end position="233"/>
    </location>
    <ligand>
        <name>L-ornithine</name>
        <dbReference type="ChEBI" id="CHEBI:46911"/>
    </ligand>
</feature>
<feature type="binding site" evidence="2">
    <location>
        <begin position="268"/>
        <end position="269"/>
    </location>
    <ligand>
        <name>carbamoyl phosphate</name>
        <dbReference type="ChEBI" id="CHEBI:58228"/>
    </ligand>
</feature>
<feature type="binding site" evidence="2">
    <location>
        <position position="296"/>
    </location>
    <ligand>
        <name>carbamoyl phosphate</name>
        <dbReference type="ChEBI" id="CHEBI:58228"/>
    </ligand>
</feature>
<name>OTC_BORPA</name>
<evidence type="ECO:0000250" key="1"/>
<evidence type="ECO:0000255" key="2">
    <source>
        <dbReference type="HAMAP-Rule" id="MF_01109"/>
    </source>
</evidence>
<proteinExistence type="inferred from homology"/>
<reference key="1">
    <citation type="journal article" date="2003" name="Nat. Genet.">
        <title>Comparative analysis of the genome sequences of Bordetella pertussis, Bordetella parapertussis and Bordetella bronchiseptica.</title>
        <authorList>
            <person name="Parkhill J."/>
            <person name="Sebaihia M."/>
            <person name="Preston A."/>
            <person name="Murphy L.D."/>
            <person name="Thomson N.R."/>
            <person name="Harris D.E."/>
            <person name="Holden M.T.G."/>
            <person name="Churcher C.M."/>
            <person name="Bentley S.D."/>
            <person name="Mungall K.L."/>
            <person name="Cerdeno-Tarraga A.-M."/>
            <person name="Temple L."/>
            <person name="James K.D."/>
            <person name="Harris B."/>
            <person name="Quail M.A."/>
            <person name="Achtman M."/>
            <person name="Atkin R."/>
            <person name="Baker S."/>
            <person name="Basham D."/>
            <person name="Bason N."/>
            <person name="Cherevach I."/>
            <person name="Chillingworth T."/>
            <person name="Collins M."/>
            <person name="Cronin A."/>
            <person name="Davis P."/>
            <person name="Doggett J."/>
            <person name="Feltwell T."/>
            <person name="Goble A."/>
            <person name="Hamlin N."/>
            <person name="Hauser H."/>
            <person name="Holroyd S."/>
            <person name="Jagels K."/>
            <person name="Leather S."/>
            <person name="Moule S."/>
            <person name="Norberczak H."/>
            <person name="O'Neil S."/>
            <person name="Ormond D."/>
            <person name="Price C."/>
            <person name="Rabbinowitsch E."/>
            <person name="Rutter S."/>
            <person name="Sanders M."/>
            <person name="Saunders D."/>
            <person name="Seeger K."/>
            <person name="Sharp S."/>
            <person name="Simmonds M."/>
            <person name="Skelton J."/>
            <person name="Squares R."/>
            <person name="Squares S."/>
            <person name="Stevens K."/>
            <person name="Unwin L."/>
            <person name="Whitehead S."/>
            <person name="Barrell B.G."/>
            <person name="Maskell D.J."/>
        </authorList>
    </citation>
    <scope>NUCLEOTIDE SEQUENCE [LARGE SCALE GENOMIC DNA]</scope>
    <source>
        <strain>12822 / ATCC BAA-587 / NCTC 13253</strain>
    </source>
</reference>
<dbReference type="EC" id="2.1.3.3" evidence="2"/>
<dbReference type="EMBL" id="BX640430">
    <property type="protein sequence ID" value="CAE37836.1"/>
    <property type="molecule type" value="Genomic_DNA"/>
</dbReference>
<dbReference type="RefSeq" id="WP_003812938.1">
    <property type="nucleotide sequence ID" value="NC_002928.3"/>
</dbReference>
<dbReference type="SMR" id="Q7W7H7"/>
<dbReference type="GeneID" id="69600463"/>
<dbReference type="GeneID" id="93204329"/>
<dbReference type="KEGG" id="bpa:BPP2542"/>
<dbReference type="HOGENOM" id="CLU_043846_3_2_4"/>
<dbReference type="UniPathway" id="UPA00068">
    <property type="reaction ID" value="UER00112"/>
</dbReference>
<dbReference type="Proteomes" id="UP000001421">
    <property type="component" value="Chromosome"/>
</dbReference>
<dbReference type="GO" id="GO:0005737">
    <property type="term" value="C:cytoplasm"/>
    <property type="evidence" value="ECO:0007669"/>
    <property type="project" value="UniProtKB-SubCell"/>
</dbReference>
<dbReference type="GO" id="GO:0016597">
    <property type="term" value="F:amino acid binding"/>
    <property type="evidence" value="ECO:0007669"/>
    <property type="project" value="InterPro"/>
</dbReference>
<dbReference type="GO" id="GO:0004585">
    <property type="term" value="F:ornithine carbamoyltransferase activity"/>
    <property type="evidence" value="ECO:0007669"/>
    <property type="project" value="UniProtKB-UniRule"/>
</dbReference>
<dbReference type="GO" id="GO:0042450">
    <property type="term" value="P:arginine biosynthetic process via ornithine"/>
    <property type="evidence" value="ECO:0007669"/>
    <property type="project" value="TreeGrafter"/>
</dbReference>
<dbReference type="GO" id="GO:0019240">
    <property type="term" value="P:citrulline biosynthetic process"/>
    <property type="evidence" value="ECO:0007669"/>
    <property type="project" value="TreeGrafter"/>
</dbReference>
<dbReference type="GO" id="GO:0006526">
    <property type="term" value="P:L-arginine biosynthetic process"/>
    <property type="evidence" value="ECO:0007669"/>
    <property type="project" value="UniProtKB-UniRule"/>
</dbReference>
<dbReference type="FunFam" id="3.40.50.1370:FF:000008">
    <property type="entry name" value="Ornithine carbamoyltransferase"/>
    <property type="match status" value="1"/>
</dbReference>
<dbReference type="Gene3D" id="3.40.50.1370">
    <property type="entry name" value="Aspartate/ornithine carbamoyltransferase"/>
    <property type="match status" value="2"/>
</dbReference>
<dbReference type="HAMAP" id="MF_01109">
    <property type="entry name" value="OTCase"/>
    <property type="match status" value="1"/>
</dbReference>
<dbReference type="InterPro" id="IPR006132">
    <property type="entry name" value="Asp/Orn_carbamoyltranf_P-bd"/>
</dbReference>
<dbReference type="InterPro" id="IPR006130">
    <property type="entry name" value="Asp/Orn_carbamoylTrfase"/>
</dbReference>
<dbReference type="InterPro" id="IPR036901">
    <property type="entry name" value="Asp/Orn_carbamoylTrfase_sf"/>
</dbReference>
<dbReference type="InterPro" id="IPR006131">
    <property type="entry name" value="Asp_carbamoyltransf_Asp/Orn-bd"/>
</dbReference>
<dbReference type="InterPro" id="IPR002292">
    <property type="entry name" value="Orn/put_carbamltrans"/>
</dbReference>
<dbReference type="InterPro" id="IPR024904">
    <property type="entry name" value="OTCase_ArgI"/>
</dbReference>
<dbReference type="NCBIfam" id="TIGR00658">
    <property type="entry name" value="orni_carb_tr"/>
    <property type="match status" value="1"/>
</dbReference>
<dbReference type="NCBIfam" id="NF001986">
    <property type="entry name" value="PRK00779.1"/>
    <property type="match status" value="1"/>
</dbReference>
<dbReference type="PANTHER" id="PTHR45753">
    <property type="entry name" value="ORNITHINE CARBAMOYLTRANSFERASE, MITOCHONDRIAL"/>
    <property type="match status" value="1"/>
</dbReference>
<dbReference type="PANTHER" id="PTHR45753:SF3">
    <property type="entry name" value="ORNITHINE TRANSCARBAMYLASE, MITOCHONDRIAL"/>
    <property type="match status" value="1"/>
</dbReference>
<dbReference type="Pfam" id="PF00185">
    <property type="entry name" value="OTCace"/>
    <property type="match status" value="1"/>
</dbReference>
<dbReference type="Pfam" id="PF02729">
    <property type="entry name" value="OTCace_N"/>
    <property type="match status" value="1"/>
</dbReference>
<dbReference type="PRINTS" id="PR00100">
    <property type="entry name" value="AOTCASE"/>
</dbReference>
<dbReference type="PRINTS" id="PR00102">
    <property type="entry name" value="OTCASE"/>
</dbReference>
<dbReference type="SUPFAM" id="SSF53671">
    <property type="entry name" value="Aspartate/ornithine carbamoyltransferase"/>
    <property type="match status" value="1"/>
</dbReference>
<dbReference type="PROSITE" id="PS00097">
    <property type="entry name" value="CARBAMOYLTRANSFERASE"/>
    <property type="match status" value="1"/>
</dbReference>
<keyword id="KW-0028">Amino-acid biosynthesis</keyword>
<keyword id="KW-0055">Arginine biosynthesis</keyword>
<keyword id="KW-0963">Cytoplasm</keyword>
<keyword id="KW-0808">Transferase</keyword>
<accession>Q7W7H7</accession>
<sequence length="313" mass="35134">MTPPTTQNGPLRHFLQFKDFSPAEIAYVLERTRIIKDKFKRYEPHMPLHDRTLAMVFEKASTRTRVSFEAGMYQMGGSVINLTSNDSQLGRSEPIEDTARVISRMVDIVMIRTFEQTRIERFASHSRVPVINGLTNEYHPCQILADIFTYIEHRGPIAGKTVAWIGDANNMSYTWLQAAEMLGFTLHVSTPAGYELDPARIGAPAAGVLKQFKDPMQACQGAHLVTTDVWTSMGYEAENEERRAAFADWCVDAEMMAAADPQAVFMHCLPAHRGEEVTGEVIDGAQSVVWDEAENRLHVQKALMEFLLLGQLA</sequence>
<comment type="function">
    <text evidence="1">Reversibly catalyzes the transfer of the carbamoyl group from carbamoyl phosphate (CP) to the N(epsilon) atom of ornithine (ORN) to produce L-citrulline.</text>
</comment>
<comment type="catalytic activity">
    <reaction evidence="2">
        <text>carbamoyl phosphate + L-ornithine = L-citrulline + phosphate + H(+)</text>
        <dbReference type="Rhea" id="RHEA:19513"/>
        <dbReference type="ChEBI" id="CHEBI:15378"/>
        <dbReference type="ChEBI" id="CHEBI:43474"/>
        <dbReference type="ChEBI" id="CHEBI:46911"/>
        <dbReference type="ChEBI" id="CHEBI:57743"/>
        <dbReference type="ChEBI" id="CHEBI:58228"/>
        <dbReference type="EC" id="2.1.3.3"/>
    </reaction>
</comment>
<comment type="pathway">
    <text evidence="2">Amino-acid biosynthesis; L-arginine biosynthesis; L-arginine from L-ornithine and carbamoyl phosphate: step 1/3.</text>
</comment>
<comment type="subcellular location">
    <subcellularLocation>
        <location evidence="2">Cytoplasm</location>
    </subcellularLocation>
</comment>
<comment type="similarity">
    <text evidence="2">Belongs to the aspartate/ornithine carbamoyltransferase superfamily. OTCase family.</text>
</comment>
<protein>
    <recommendedName>
        <fullName evidence="2">Ornithine carbamoyltransferase</fullName>
        <shortName evidence="2">OTCase</shortName>
        <ecNumber evidence="2">2.1.3.3</ecNumber>
    </recommendedName>
</protein>